<feature type="chain" id="PRO_0000347738" description="Alanine--tRNA ligase">
    <location>
        <begin position="1"/>
        <end position="874"/>
    </location>
</feature>
<feature type="binding site" evidence="1">
    <location>
        <position position="562"/>
    </location>
    <ligand>
        <name>Zn(2+)</name>
        <dbReference type="ChEBI" id="CHEBI:29105"/>
    </ligand>
</feature>
<feature type="binding site" evidence="1">
    <location>
        <position position="566"/>
    </location>
    <ligand>
        <name>Zn(2+)</name>
        <dbReference type="ChEBI" id="CHEBI:29105"/>
    </ligand>
</feature>
<feature type="binding site" evidence="1">
    <location>
        <position position="665"/>
    </location>
    <ligand>
        <name>Zn(2+)</name>
        <dbReference type="ChEBI" id="CHEBI:29105"/>
    </ligand>
</feature>
<feature type="binding site" evidence="1">
    <location>
        <position position="669"/>
    </location>
    <ligand>
        <name>Zn(2+)</name>
        <dbReference type="ChEBI" id="CHEBI:29105"/>
    </ligand>
</feature>
<dbReference type="EC" id="6.1.1.7" evidence="1"/>
<dbReference type="EMBL" id="CP000094">
    <property type="protein sequence ID" value="ABA76012.1"/>
    <property type="molecule type" value="Genomic_DNA"/>
</dbReference>
<dbReference type="RefSeq" id="WP_011335527.1">
    <property type="nucleotide sequence ID" value="NC_007492.2"/>
</dbReference>
<dbReference type="SMR" id="Q3K892"/>
<dbReference type="KEGG" id="pfo:Pfl01_4275"/>
<dbReference type="eggNOG" id="COG0013">
    <property type="taxonomic scope" value="Bacteria"/>
</dbReference>
<dbReference type="HOGENOM" id="CLU_004485_1_1_6"/>
<dbReference type="Proteomes" id="UP000002704">
    <property type="component" value="Chromosome"/>
</dbReference>
<dbReference type="GO" id="GO:0005829">
    <property type="term" value="C:cytosol"/>
    <property type="evidence" value="ECO:0007669"/>
    <property type="project" value="TreeGrafter"/>
</dbReference>
<dbReference type="GO" id="GO:0004813">
    <property type="term" value="F:alanine-tRNA ligase activity"/>
    <property type="evidence" value="ECO:0007669"/>
    <property type="project" value="UniProtKB-UniRule"/>
</dbReference>
<dbReference type="GO" id="GO:0002161">
    <property type="term" value="F:aminoacyl-tRNA deacylase activity"/>
    <property type="evidence" value="ECO:0007669"/>
    <property type="project" value="TreeGrafter"/>
</dbReference>
<dbReference type="GO" id="GO:0005524">
    <property type="term" value="F:ATP binding"/>
    <property type="evidence" value="ECO:0007669"/>
    <property type="project" value="UniProtKB-UniRule"/>
</dbReference>
<dbReference type="GO" id="GO:0000049">
    <property type="term" value="F:tRNA binding"/>
    <property type="evidence" value="ECO:0007669"/>
    <property type="project" value="UniProtKB-KW"/>
</dbReference>
<dbReference type="GO" id="GO:0008270">
    <property type="term" value="F:zinc ion binding"/>
    <property type="evidence" value="ECO:0007669"/>
    <property type="project" value="UniProtKB-UniRule"/>
</dbReference>
<dbReference type="GO" id="GO:0006419">
    <property type="term" value="P:alanyl-tRNA aminoacylation"/>
    <property type="evidence" value="ECO:0007669"/>
    <property type="project" value="UniProtKB-UniRule"/>
</dbReference>
<dbReference type="GO" id="GO:0045892">
    <property type="term" value="P:negative regulation of DNA-templated transcription"/>
    <property type="evidence" value="ECO:0007669"/>
    <property type="project" value="TreeGrafter"/>
</dbReference>
<dbReference type="CDD" id="cd00673">
    <property type="entry name" value="AlaRS_core"/>
    <property type="match status" value="1"/>
</dbReference>
<dbReference type="FunFam" id="2.40.30.130:FF:000001">
    <property type="entry name" value="Alanine--tRNA ligase"/>
    <property type="match status" value="1"/>
</dbReference>
<dbReference type="FunFam" id="3.10.310.40:FF:000001">
    <property type="entry name" value="Alanine--tRNA ligase"/>
    <property type="match status" value="1"/>
</dbReference>
<dbReference type="FunFam" id="3.30.54.20:FF:000001">
    <property type="entry name" value="Alanine--tRNA ligase"/>
    <property type="match status" value="1"/>
</dbReference>
<dbReference type="FunFam" id="3.30.930.10:FF:000004">
    <property type="entry name" value="Alanine--tRNA ligase"/>
    <property type="match status" value="1"/>
</dbReference>
<dbReference type="FunFam" id="3.30.980.10:FF:000004">
    <property type="entry name" value="Alanine--tRNA ligase, cytoplasmic"/>
    <property type="match status" value="1"/>
</dbReference>
<dbReference type="Gene3D" id="2.40.30.130">
    <property type="match status" value="1"/>
</dbReference>
<dbReference type="Gene3D" id="3.10.310.40">
    <property type="match status" value="1"/>
</dbReference>
<dbReference type="Gene3D" id="3.30.54.20">
    <property type="match status" value="1"/>
</dbReference>
<dbReference type="Gene3D" id="6.10.250.550">
    <property type="match status" value="1"/>
</dbReference>
<dbReference type="Gene3D" id="3.30.930.10">
    <property type="entry name" value="Bira Bifunctional Protein, Domain 2"/>
    <property type="match status" value="1"/>
</dbReference>
<dbReference type="Gene3D" id="3.30.980.10">
    <property type="entry name" value="Threonyl-trna Synthetase, Chain A, domain 2"/>
    <property type="match status" value="1"/>
</dbReference>
<dbReference type="HAMAP" id="MF_00036_B">
    <property type="entry name" value="Ala_tRNA_synth_B"/>
    <property type="match status" value="1"/>
</dbReference>
<dbReference type="InterPro" id="IPR045864">
    <property type="entry name" value="aa-tRNA-synth_II/BPL/LPL"/>
</dbReference>
<dbReference type="InterPro" id="IPR002318">
    <property type="entry name" value="Ala-tRNA-lgiase_IIc"/>
</dbReference>
<dbReference type="InterPro" id="IPR018162">
    <property type="entry name" value="Ala-tRNA-ligase_IIc_anticod-bd"/>
</dbReference>
<dbReference type="InterPro" id="IPR018165">
    <property type="entry name" value="Ala-tRNA-synth_IIc_core"/>
</dbReference>
<dbReference type="InterPro" id="IPR018164">
    <property type="entry name" value="Ala-tRNA-synth_IIc_N"/>
</dbReference>
<dbReference type="InterPro" id="IPR050058">
    <property type="entry name" value="Ala-tRNA_ligase"/>
</dbReference>
<dbReference type="InterPro" id="IPR023033">
    <property type="entry name" value="Ala_tRNA_ligase_euk/bac"/>
</dbReference>
<dbReference type="InterPro" id="IPR003156">
    <property type="entry name" value="DHHA1_dom"/>
</dbReference>
<dbReference type="InterPro" id="IPR018163">
    <property type="entry name" value="Thr/Ala-tRNA-synth_IIc_edit"/>
</dbReference>
<dbReference type="InterPro" id="IPR009000">
    <property type="entry name" value="Transl_B-barrel_sf"/>
</dbReference>
<dbReference type="InterPro" id="IPR012947">
    <property type="entry name" value="tRNA_SAD"/>
</dbReference>
<dbReference type="NCBIfam" id="TIGR00344">
    <property type="entry name" value="alaS"/>
    <property type="match status" value="1"/>
</dbReference>
<dbReference type="PANTHER" id="PTHR11777:SF9">
    <property type="entry name" value="ALANINE--TRNA LIGASE, CYTOPLASMIC"/>
    <property type="match status" value="1"/>
</dbReference>
<dbReference type="PANTHER" id="PTHR11777">
    <property type="entry name" value="ALANYL-TRNA SYNTHETASE"/>
    <property type="match status" value="1"/>
</dbReference>
<dbReference type="Pfam" id="PF02272">
    <property type="entry name" value="DHHA1"/>
    <property type="match status" value="1"/>
</dbReference>
<dbReference type="Pfam" id="PF01411">
    <property type="entry name" value="tRNA-synt_2c"/>
    <property type="match status" value="1"/>
</dbReference>
<dbReference type="Pfam" id="PF07973">
    <property type="entry name" value="tRNA_SAD"/>
    <property type="match status" value="1"/>
</dbReference>
<dbReference type="PRINTS" id="PR00980">
    <property type="entry name" value="TRNASYNTHALA"/>
</dbReference>
<dbReference type="SMART" id="SM00863">
    <property type="entry name" value="tRNA_SAD"/>
    <property type="match status" value="1"/>
</dbReference>
<dbReference type="SUPFAM" id="SSF55681">
    <property type="entry name" value="Class II aaRS and biotin synthetases"/>
    <property type="match status" value="1"/>
</dbReference>
<dbReference type="SUPFAM" id="SSF101353">
    <property type="entry name" value="Putative anticodon-binding domain of alanyl-tRNA synthetase (AlaRS)"/>
    <property type="match status" value="1"/>
</dbReference>
<dbReference type="SUPFAM" id="SSF55186">
    <property type="entry name" value="ThrRS/AlaRS common domain"/>
    <property type="match status" value="1"/>
</dbReference>
<dbReference type="SUPFAM" id="SSF50447">
    <property type="entry name" value="Translation proteins"/>
    <property type="match status" value="1"/>
</dbReference>
<dbReference type="PROSITE" id="PS50860">
    <property type="entry name" value="AA_TRNA_LIGASE_II_ALA"/>
    <property type="match status" value="1"/>
</dbReference>
<comment type="function">
    <text evidence="1">Catalyzes the attachment of alanine to tRNA(Ala) in a two-step reaction: alanine is first activated by ATP to form Ala-AMP and then transferred to the acceptor end of tRNA(Ala). Also edits incorrectly charged Ser-tRNA(Ala) and Gly-tRNA(Ala) via its editing domain.</text>
</comment>
<comment type="catalytic activity">
    <reaction evidence="1">
        <text>tRNA(Ala) + L-alanine + ATP = L-alanyl-tRNA(Ala) + AMP + diphosphate</text>
        <dbReference type="Rhea" id="RHEA:12540"/>
        <dbReference type="Rhea" id="RHEA-COMP:9657"/>
        <dbReference type="Rhea" id="RHEA-COMP:9923"/>
        <dbReference type="ChEBI" id="CHEBI:30616"/>
        <dbReference type="ChEBI" id="CHEBI:33019"/>
        <dbReference type="ChEBI" id="CHEBI:57972"/>
        <dbReference type="ChEBI" id="CHEBI:78442"/>
        <dbReference type="ChEBI" id="CHEBI:78497"/>
        <dbReference type="ChEBI" id="CHEBI:456215"/>
        <dbReference type="EC" id="6.1.1.7"/>
    </reaction>
</comment>
<comment type="cofactor">
    <cofactor evidence="1">
        <name>Zn(2+)</name>
        <dbReference type="ChEBI" id="CHEBI:29105"/>
    </cofactor>
    <text evidence="1">Binds 1 zinc ion per subunit.</text>
</comment>
<comment type="subcellular location">
    <subcellularLocation>
        <location evidence="1">Cytoplasm</location>
    </subcellularLocation>
</comment>
<comment type="domain">
    <text evidence="1">Consists of three domains; the N-terminal catalytic domain, the editing domain and the C-terminal C-Ala domain. The editing domain removes incorrectly charged amino acids, while the C-Ala domain, along with tRNA(Ala), serves as a bridge to cooperatively bring together the editing and aminoacylation centers thus stimulating deacylation of misacylated tRNAs.</text>
</comment>
<comment type="similarity">
    <text evidence="1">Belongs to the class-II aminoacyl-tRNA synthetase family.</text>
</comment>
<name>SYA_PSEPF</name>
<gene>
    <name evidence="1" type="primary">alaS</name>
    <name type="ordered locus">Pfl01_4275</name>
</gene>
<organism>
    <name type="scientific">Pseudomonas fluorescens (strain Pf0-1)</name>
    <dbReference type="NCBI Taxonomy" id="205922"/>
    <lineage>
        <taxon>Bacteria</taxon>
        <taxon>Pseudomonadati</taxon>
        <taxon>Pseudomonadota</taxon>
        <taxon>Gammaproteobacteria</taxon>
        <taxon>Pseudomonadales</taxon>
        <taxon>Pseudomonadaceae</taxon>
        <taxon>Pseudomonas</taxon>
    </lineage>
</organism>
<accession>Q3K892</accession>
<protein>
    <recommendedName>
        <fullName evidence="1">Alanine--tRNA ligase</fullName>
        <ecNumber evidence="1">6.1.1.7</ecNumber>
    </recommendedName>
    <alternativeName>
        <fullName evidence="1">Alanyl-tRNA synthetase</fullName>
        <shortName evidence="1">AlaRS</shortName>
    </alternativeName>
</protein>
<keyword id="KW-0030">Aminoacyl-tRNA synthetase</keyword>
<keyword id="KW-0067">ATP-binding</keyword>
<keyword id="KW-0963">Cytoplasm</keyword>
<keyword id="KW-0436">Ligase</keyword>
<keyword id="KW-0479">Metal-binding</keyword>
<keyword id="KW-0547">Nucleotide-binding</keyword>
<keyword id="KW-0648">Protein biosynthesis</keyword>
<keyword id="KW-0694">RNA-binding</keyword>
<keyword id="KW-0820">tRNA-binding</keyword>
<keyword id="KW-0862">Zinc</keyword>
<sequence>MKSAEIREAFLRFFEEQGHTRVASSSLIPGNDPTLLFTNAGMNQFKDCFLGQEKRAYTRAVSSQKCVRAGGKHNDLENVGYTARHHTFFEMLGNFSFGDYFKRDAITYAWNFLTSEKWLNLPKEKLWVTVYASDDEAYDIWTKEVGVPAERMVRIGDNKGAPYASDNFWTMGDTGPCGPCTEIFYDHGADIWGGPPGSPEEDGDRYIEIWNNVFMQFNRTADGVLHPLPAPSVDTGMGLERISAVLQHVHSNYEIDLFQSLLAASAKAIGCTNDAQASLKVVADHIRSCGFLIADGVLPSNEGRGYVLRRIIRRACRHGNKLGAKGSFFYLIVAALVAEMGEAFPELKSQQAHIERVLKAEEEQFAKTLEQGLKILEQDLAELKGDVVPGDVVFKLYDTYGFPMDLTADIARERSLTIDEAGFEREMEAQRVRARSASSFGLDYNSLVKVDVDTEFTGYHATSGSAKVVALYKDGQSVDVLSEGQEGVVVLNQTPFYAESGGQVGDCGYLQAGNSRFDVRDTTKTGGAFLHHGVLASGSLIVGAPVETHVEADVRHATSLNHSATHLLHAALRKVLGDHVQQKGSLVDSQRLRFDFSHFEAIKPEQIKALEDIVNAEIRKNSAVETEETDIETAKQKGAMALFGEKYGDNVRVLSMGGDFSVELCGGIHANRTGDIGLLKIISEGGVASGVRRIEAVTGAAALAYLNAAEEQLKEAASLVKGSRDNLIDKLSAVLERNRALEKQLEQLQAKAAAAAGDDLSASAVDVKGVKVLAVRLDGQDGKALLALVDQLKNKLGRAVILLGSVHEEKVVLVAGVTKDLTGQLKAGDLMKQAAAAVGGKGGGRPDMAQGGGVDAGALDGALALTVPFVEQGL</sequence>
<proteinExistence type="inferred from homology"/>
<evidence type="ECO:0000255" key="1">
    <source>
        <dbReference type="HAMAP-Rule" id="MF_00036"/>
    </source>
</evidence>
<reference key="1">
    <citation type="journal article" date="2009" name="Genome Biol.">
        <title>Genomic and genetic analyses of diversity and plant interactions of Pseudomonas fluorescens.</title>
        <authorList>
            <person name="Silby M.W."/>
            <person name="Cerdeno-Tarraga A.M."/>
            <person name="Vernikos G.S."/>
            <person name="Giddens S.R."/>
            <person name="Jackson R.W."/>
            <person name="Preston G.M."/>
            <person name="Zhang X.-X."/>
            <person name="Moon C.D."/>
            <person name="Gehrig S.M."/>
            <person name="Godfrey S.A.C."/>
            <person name="Knight C.G."/>
            <person name="Malone J.G."/>
            <person name="Robinson Z."/>
            <person name="Spiers A.J."/>
            <person name="Harris S."/>
            <person name="Challis G.L."/>
            <person name="Yaxley A.M."/>
            <person name="Harris D."/>
            <person name="Seeger K."/>
            <person name="Murphy L."/>
            <person name="Rutter S."/>
            <person name="Squares R."/>
            <person name="Quail M.A."/>
            <person name="Saunders E."/>
            <person name="Mavromatis K."/>
            <person name="Brettin T.S."/>
            <person name="Bentley S.D."/>
            <person name="Hothersall J."/>
            <person name="Stephens E."/>
            <person name="Thomas C.M."/>
            <person name="Parkhill J."/>
            <person name="Levy S.B."/>
            <person name="Rainey P.B."/>
            <person name="Thomson N.R."/>
        </authorList>
    </citation>
    <scope>NUCLEOTIDE SEQUENCE [LARGE SCALE GENOMIC DNA]</scope>
    <source>
        <strain>Pf0-1</strain>
    </source>
</reference>